<dbReference type="EMBL" id="AF109184">
    <property type="protein sequence ID" value="AAQ13493.1"/>
    <property type="molecule type" value="mRNA"/>
</dbReference>
<dbReference type="EMBL" id="AK001721">
    <property type="protein sequence ID" value="BAA91861.1"/>
    <property type="status" value="ALT_FRAME"/>
    <property type="molecule type" value="mRNA"/>
</dbReference>
<dbReference type="EMBL" id="AK001882">
    <property type="protein sequence ID" value="BAA91959.1"/>
    <property type="status" value="ALT_SEQ"/>
    <property type="molecule type" value="mRNA"/>
</dbReference>
<dbReference type="EMBL" id="AK289577">
    <property type="protein sequence ID" value="BAF82266.1"/>
    <property type="molecule type" value="mRNA"/>
</dbReference>
<dbReference type="EMBL" id="AK296757">
    <property type="protein sequence ID" value="BAH12427.1"/>
    <property type="molecule type" value="mRNA"/>
</dbReference>
<dbReference type="EMBL" id="AK296837">
    <property type="protein sequence ID" value="BAH12439.1"/>
    <property type="molecule type" value="mRNA"/>
</dbReference>
<dbReference type="EMBL" id="AC022337">
    <property type="status" value="NOT_ANNOTATED_CDS"/>
    <property type="molecule type" value="Genomic_DNA"/>
</dbReference>
<dbReference type="EMBL" id="AC068777">
    <property type="status" value="NOT_ANNOTATED_CDS"/>
    <property type="molecule type" value="Genomic_DNA"/>
</dbReference>
<dbReference type="EMBL" id="CH471052">
    <property type="protein sequence ID" value="EAW79076.1"/>
    <property type="molecule type" value="Genomic_DNA"/>
</dbReference>
<dbReference type="EMBL" id="CH471052">
    <property type="protein sequence ID" value="EAW79075.1"/>
    <property type="molecule type" value="Genomic_DNA"/>
</dbReference>
<dbReference type="EMBL" id="CH471052">
    <property type="protein sequence ID" value="EAW79079.1"/>
    <property type="molecule type" value="Genomic_DNA"/>
</dbReference>
<dbReference type="EMBL" id="BC013424">
    <property type="protein sequence ID" value="AAH13424.1"/>
    <property type="molecule type" value="mRNA"/>
</dbReference>
<dbReference type="EMBL" id="BC032661">
    <property type="protein sequence ID" value="AAH32661.1"/>
    <property type="molecule type" value="mRNA"/>
</dbReference>
<dbReference type="EMBL" id="BC041699">
    <property type="protein sequence ID" value="AAH41699.1"/>
    <property type="molecule type" value="mRNA"/>
</dbReference>
<dbReference type="EMBL" id="AL096748">
    <property type="protein sequence ID" value="CAB46423.1"/>
    <property type="status" value="ALT_SEQ"/>
    <property type="molecule type" value="mRNA"/>
</dbReference>
<dbReference type="CCDS" id="CCDS3098.1">
    <molecule id="Q8IUR7-6"/>
</dbReference>
<dbReference type="CCDS" id="CCDS54646.1">
    <molecule id="Q8IUR7-2"/>
</dbReference>
<dbReference type="CCDS" id="CCDS58853.1">
    <molecule id="Q8IUR7-8"/>
</dbReference>
<dbReference type="CCDS" id="CCDS58854.1">
    <molecule id="Q8IUR7-7"/>
</dbReference>
<dbReference type="CCDS" id="CCDS87139.1">
    <molecule id="Q8IUR7-1"/>
</dbReference>
<dbReference type="CCDS" id="CCDS87140.1">
    <molecule id="Q8IUR7-3"/>
</dbReference>
<dbReference type="PIR" id="T12513">
    <property type="entry name" value="T12513"/>
</dbReference>
<dbReference type="RefSeq" id="NP_001253970.1">
    <molecule id="Q8IUR7-7"/>
    <property type="nucleotide sequence ID" value="NM_001267041.2"/>
</dbReference>
<dbReference type="RefSeq" id="NP_001253971.1">
    <molecule id="Q8IUR7-8"/>
    <property type="nucleotide sequence ID" value="NM_001267042.3"/>
</dbReference>
<dbReference type="RefSeq" id="NP_001269271.1">
    <property type="nucleotide sequence ID" value="NM_001282342.1"/>
</dbReference>
<dbReference type="RefSeq" id="NP_001350870.1">
    <molecule id="Q8IUR7-1"/>
    <property type="nucleotide sequence ID" value="NM_001363941.2"/>
</dbReference>
<dbReference type="RefSeq" id="NP_001350871.1">
    <molecule id="Q8IUR7-3"/>
    <property type="nucleotide sequence ID" value="NM_001363942.1"/>
</dbReference>
<dbReference type="RefSeq" id="NP_054873.2">
    <molecule id="Q8IUR7-6"/>
    <property type="nucleotide sequence ID" value="NM_014154.4"/>
</dbReference>
<dbReference type="RefSeq" id="NP_056211.2">
    <molecule id="Q8IUR7-2"/>
    <property type="nucleotide sequence ID" value="NM_015396.5"/>
</dbReference>
<dbReference type="RefSeq" id="NP_998819.1">
    <molecule id="Q8IUR7-6"/>
    <property type="nucleotide sequence ID" value="NM_213654.3"/>
</dbReference>
<dbReference type="RefSeq" id="XP_006713627.1">
    <property type="nucleotide sequence ID" value="XM_006713564.3"/>
</dbReference>
<dbReference type="RefSeq" id="XP_006713628.1">
    <molecule id="Q8IUR7-2"/>
    <property type="nucleotide sequence ID" value="XM_006713565.3"/>
</dbReference>
<dbReference type="RefSeq" id="XP_006713629.1">
    <molecule id="Q8IUR7-3"/>
    <property type="nucleotide sequence ID" value="XM_006713566.5"/>
</dbReference>
<dbReference type="RefSeq" id="XP_011510934.1">
    <molecule id="Q8IUR7-3"/>
    <property type="nucleotide sequence ID" value="XM_011512632.2"/>
</dbReference>
<dbReference type="RefSeq" id="XP_011510935.1">
    <property type="nucleotide sequence ID" value="XM_011512633.1"/>
</dbReference>
<dbReference type="RefSeq" id="XP_054201993.1">
    <molecule id="Q8IUR7-2"/>
    <property type="nucleotide sequence ID" value="XM_054346018.1"/>
</dbReference>
<dbReference type="RefSeq" id="XP_054201994.1">
    <molecule id="Q8IUR7-3"/>
    <property type="nucleotide sequence ID" value="XM_054346019.1"/>
</dbReference>
<dbReference type="RefSeq" id="XP_054201995.1">
    <molecule id="Q8IUR7-3"/>
    <property type="nucleotide sequence ID" value="XM_054346020.1"/>
</dbReference>
<dbReference type="PDB" id="7NSC">
    <property type="method" value="EM"/>
    <property type="resolution" value="3.30 A"/>
    <property type="chains" value="E=16-673"/>
</dbReference>
<dbReference type="PDBsum" id="7NSC"/>
<dbReference type="EMDB" id="EMD-12564"/>
<dbReference type="EMDB" id="EMD-13210"/>
<dbReference type="SMR" id="Q8IUR7"/>
<dbReference type="BioGRID" id="117376">
    <property type="interactions" value="256"/>
</dbReference>
<dbReference type="ComplexPortal" id="CPX-7901">
    <property type="entry name" value="GID E3 ubiquitin ligase complex, RMND5B-RANBP9 variant"/>
</dbReference>
<dbReference type="ComplexPortal" id="CPX-7902">
    <property type="entry name" value="GID E3 ubiquitin ligase complex, RMND5A-RANBP10 variant"/>
</dbReference>
<dbReference type="ComplexPortal" id="CPX-7903">
    <property type="entry name" value="GID E3 ubiquitin ligase complex, RMND5B-RANBP10 variant"/>
</dbReference>
<dbReference type="ComplexPortal" id="CPX-876">
    <property type="entry name" value="GID E3 ubiquitin ligase complex, RMND5A-RANBP9 variant"/>
</dbReference>
<dbReference type="CORUM" id="Q8IUR7"/>
<dbReference type="FunCoup" id="Q8IUR7">
    <property type="interactions" value="3176"/>
</dbReference>
<dbReference type="IntAct" id="Q8IUR7">
    <property type="interactions" value="139"/>
</dbReference>
<dbReference type="MINT" id="Q8IUR7"/>
<dbReference type="STRING" id="9606.ENSP00000419413"/>
<dbReference type="GlyGen" id="Q8IUR7">
    <property type="glycosylation" value="1 site, 1 O-linked glycan (1 site)"/>
</dbReference>
<dbReference type="iPTMnet" id="Q8IUR7"/>
<dbReference type="PhosphoSitePlus" id="Q8IUR7"/>
<dbReference type="BioMuta" id="ARMC8"/>
<dbReference type="DMDM" id="145558852"/>
<dbReference type="jPOST" id="Q8IUR7"/>
<dbReference type="MassIVE" id="Q8IUR7"/>
<dbReference type="PaxDb" id="9606-ENSP00000420333"/>
<dbReference type="PeptideAtlas" id="Q8IUR7"/>
<dbReference type="ProteomicsDB" id="24142"/>
<dbReference type="ProteomicsDB" id="6568"/>
<dbReference type="ProteomicsDB" id="70607">
    <molecule id="Q8IUR7-1"/>
</dbReference>
<dbReference type="ProteomicsDB" id="70608">
    <molecule id="Q8IUR7-2"/>
</dbReference>
<dbReference type="ProteomicsDB" id="70609">
    <molecule id="Q8IUR7-3"/>
</dbReference>
<dbReference type="ProteomicsDB" id="70610">
    <molecule id="Q8IUR7-6"/>
</dbReference>
<dbReference type="Pumba" id="Q8IUR7"/>
<dbReference type="Antibodypedia" id="33425">
    <property type="antibodies" value="149 antibodies from 21 providers"/>
</dbReference>
<dbReference type="DNASU" id="25852"/>
<dbReference type="Ensembl" id="ENST00000358441.6">
    <molecule id="Q8IUR7-6"/>
    <property type="protein sequence ID" value="ENSP00000351221.2"/>
    <property type="gene ID" value="ENSG00000114098.18"/>
</dbReference>
<dbReference type="Ensembl" id="ENST00000461822.5">
    <molecule id="Q8IUR7-8"/>
    <property type="protein sequence ID" value="ENSP00000420706.1"/>
    <property type="gene ID" value="ENSG00000114098.18"/>
</dbReference>
<dbReference type="Ensembl" id="ENST00000469044.6">
    <molecule id="Q8IUR7-1"/>
    <property type="protein sequence ID" value="ENSP00000419413.1"/>
    <property type="gene ID" value="ENSG00000114098.18"/>
</dbReference>
<dbReference type="Ensembl" id="ENST00000471453.5">
    <molecule id="Q8IUR7-6"/>
    <property type="protein sequence ID" value="ENSP00000420440.1"/>
    <property type="gene ID" value="ENSG00000114098.18"/>
</dbReference>
<dbReference type="Ensembl" id="ENST00000481646.5">
    <molecule id="Q8IUR7-2"/>
    <property type="protein sequence ID" value="ENSP00000420333.1"/>
    <property type="gene ID" value="ENSG00000114098.18"/>
</dbReference>
<dbReference type="Ensembl" id="ENST00000491704.5">
    <molecule id="Q8IUR7-3"/>
    <property type="protein sequence ID" value="ENSP00000417304.1"/>
    <property type="gene ID" value="ENSG00000114098.18"/>
</dbReference>
<dbReference type="Ensembl" id="ENST00000538260.5">
    <molecule id="Q8IUR7-7"/>
    <property type="protein sequence ID" value="ENSP00000441592.1"/>
    <property type="gene ID" value="ENSG00000114098.18"/>
</dbReference>
<dbReference type="GeneID" id="25852"/>
<dbReference type="KEGG" id="hsa:25852"/>
<dbReference type="MANE-Select" id="ENST00000469044.6">
    <property type="protein sequence ID" value="ENSP00000419413.1"/>
    <property type="RefSeq nucleotide sequence ID" value="NM_001363941.2"/>
    <property type="RefSeq protein sequence ID" value="NP_001350870.1"/>
</dbReference>
<dbReference type="UCSC" id="uc003erw.6">
    <molecule id="Q8IUR7-1"/>
    <property type="organism name" value="human"/>
</dbReference>
<dbReference type="AGR" id="HGNC:24999"/>
<dbReference type="CTD" id="25852"/>
<dbReference type="DisGeNET" id="25852"/>
<dbReference type="GeneCards" id="ARMC8"/>
<dbReference type="HGNC" id="HGNC:24999">
    <property type="gene designation" value="ARMC8"/>
</dbReference>
<dbReference type="HPA" id="ENSG00000114098">
    <property type="expression patterns" value="Low tissue specificity"/>
</dbReference>
<dbReference type="MIM" id="618521">
    <property type="type" value="gene"/>
</dbReference>
<dbReference type="neXtProt" id="NX_Q8IUR7"/>
<dbReference type="OpenTargets" id="ENSG00000114098"/>
<dbReference type="PharmGKB" id="PA134984953"/>
<dbReference type="VEuPathDB" id="HostDB:ENSG00000114098"/>
<dbReference type="eggNOG" id="KOG1293">
    <property type="taxonomic scope" value="Eukaryota"/>
</dbReference>
<dbReference type="GeneTree" id="ENSGT00390000003033"/>
<dbReference type="HOGENOM" id="CLU_776045_0_0_1"/>
<dbReference type="InParanoid" id="Q8IUR7"/>
<dbReference type="OMA" id="KGTDQHV"/>
<dbReference type="OrthoDB" id="5559898at2759"/>
<dbReference type="PAN-GO" id="Q8IUR7">
    <property type="GO annotations" value="2 GO annotations based on evolutionary models"/>
</dbReference>
<dbReference type="PhylomeDB" id="Q8IUR7"/>
<dbReference type="TreeFam" id="TF324806"/>
<dbReference type="PathwayCommons" id="Q8IUR7"/>
<dbReference type="Reactome" id="R-HSA-6798695">
    <property type="pathway name" value="Neutrophil degranulation"/>
</dbReference>
<dbReference type="Reactome" id="R-HSA-9861718">
    <property type="pathway name" value="Regulation of pyruvate metabolism"/>
</dbReference>
<dbReference type="SignaLink" id="Q8IUR7"/>
<dbReference type="BioGRID-ORCS" id="25852">
    <property type="hits" value="10 hits in 1156 CRISPR screens"/>
</dbReference>
<dbReference type="ChiTaRS" id="ARMC8">
    <property type="organism name" value="human"/>
</dbReference>
<dbReference type="GenomeRNAi" id="25852"/>
<dbReference type="Pharos" id="Q8IUR7">
    <property type="development level" value="Tbio"/>
</dbReference>
<dbReference type="PRO" id="PR:Q8IUR7"/>
<dbReference type="Proteomes" id="UP000005640">
    <property type="component" value="Chromosome 3"/>
</dbReference>
<dbReference type="RNAct" id="Q8IUR7">
    <property type="molecule type" value="protein"/>
</dbReference>
<dbReference type="Bgee" id="ENSG00000114098">
    <property type="expression patterns" value="Expressed in oocyte and 198 other cell types or tissues"/>
</dbReference>
<dbReference type="ExpressionAtlas" id="Q8IUR7">
    <property type="expression patterns" value="baseline and differential"/>
</dbReference>
<dbReference type="GO" id="GO:0005737">
    <property type="term" value="C:cytoplasm"/>
    <property type="evidence" value="ECO:0000314"/>
    <property type="project" value="UniProtKB"/>
</dbReference>
<dbReference type="GO" id="GO:0005829">
    <property type="term" value="C:cytosol"/>
    <property type="evidence" value="ECO:0000314"/>
    <property type="project" value="HPA"/>
</dbReference>
<dbReference type="GO" id="GO:0005576">
    <property type="term" value="C:extracellular region"/>
    <property type="evidence" value="ECO:0000304"/>
    <property type="project" value="Reactome"/>
</dbReference>
<dbReference type="GO" id="GO:0034657">
    <property type="term" value="C:GID complex"/>
    <property type="evidence" value="ECO:0000318"/>
    <property type="project" value="GO_Central"/>
</dbReference>
<dbReference type="GO" id="GO:0043231">
    <property type="term" value="C:intracellular membrane-bounded organelle"/>
    <property type="evidence" value="ECO:0000314"/>
    <property type="project" value="HPA"/>
</dbReference>
<dbReference type="GO" id="GO:0005654">
    <property type="term" value="C:nucleoplasm"/>
    <property type="evidence" value="ECO:0000314"/>
    <property type="project" value="HPA"/>
</dbReference>
<dbReference type="GO" id="GO:0005634">
    <property type="term" value="C:nucleus"/>
    <property type="evidence" value="ECO:0000314"/>
    <property type="project" value="UniProtKB"/>
</dbReference>
<dbReference type="GO" id="GO:0035580">
    <property type="term" value="C:specific granule lumen"/>
    <property type="evidence" value="ECO:0000304"/>
    <property type="project" value="Reactome"/>
</dbReference>
<dbReference type="GO" id="GO:1904724">
    <property type="term" value="C:tertiary granule lumen"/>
    <property type="evidence" value="ECO:0000304"/>
    <property type="project" value="Reactome"/>
</dbReference>
<dbReference type="GO" id="GO:0000151">
    <property type="term" value="C:ubiquitin ligase complex"/>
    <property type="evidence" value="ECO:0000314"/>
    <property type="project" value="UniProtKB"/>
</dbReference>
<dbReference type="GO" id="GO:0043161">
    <property type="term" value="P:proteasome-mediated ubiquitin-dependent protein catabolic process"/>
    <property type="evidence" value="ECO:0000318"/>
    <property type="project" value="GO_Central"/>
</dbReference>
<dbReference type="FunFam" id="1.25.10.10:FF:000061">
    <property type="entry name" value="armadillo repeat-containing protein 8 isoform X1"/>
    <property type="match status" value="1"/>
</dbReference>
<dbReference type="FunFam" id="1.25.10.10:FF:000070">
    <property type="entry name" value="armadillo repeat-containing protein 8 isoform X1"/>
    <property type="match status" value="1"/>
</dbReference>
<dbReference type="Gene3D" id="1.25.10.10">
    <property type="entry name" value="Leucine-rich Repeat Variant"/>
    <property type="match status" value="2"/>
</dbReference>
<dbReference type="InterPro" id="IPR011989">
    <property type="entry name" value="ARM-like"/>
</dbReference>
<dbReference type="InterPro" id="IPR016024">
    <property type="entry name" value="ARM-type_fold"/>
</dbReference>
<dbReference type="InterPro" id="IPR000225">
    <property type="entry name" value="Armadillo"/>
</dbReference>
<dbReference type="InterPro" id="IPR038739">
    <property type="entry name" value="ARMC8/Vid28"/>
</dbReference>
<dbReference type="PANTHER" id="PTHR15651">
    <property type="entry name" value="ARMADILLO REPEAT-CONTAINING PROTEIN 8"/>
    <property type="match status" value="1"/>
</dbReference>
<dbReference type="PANTHER" id="PTHR15651:SF7">
    <property type="entry name" value="ARMADILLO REPEAT-CONTAINING PROTEIN 8"/>
    <property type="match status" value="1"/>
</dbReference>
<dbReference type="Pfam" id="PF00514">
    <property type="entry name" value="Arm"/>
    <property type="match status" value="1"/>
</dbReference>
<dbReference type="SMART" id="SM00185">
    <property type="entry name" value="ARM"/>
    <property type="match status" value="9"/>
</dbReference>
<dbReference type="SUPFAM" id="SSF48371">
    <property type="entry name" value="ARM repeat"/>
    <property type="match status" value="1"/>
</dbReference>
<dbReference type="PROSITE" id="PS50176">
    <property type="entry name" value="ARM_REPEAT"/>
    <property type="match status" value="1"/>
</dbReference>
<feature type="initiator methionine" description="Removed" evidence="3">
    <location>
        <position position="1"/>
    </location>
</feature>
<feature type="chain" id="PRO_0000284408" description="Armadillo repeat-containing protein 8">
    <location>
        <begin position="2"/>
        <end position="673"/>
    </location>
</feature>
<feature type="repeat" description="ARM 1">
    <location>
        <begin position="51"/>
        <end position="92"/>
    </location>
</feature>
<feature type="repeat" description="ARM 2">
    <location>
        <begin position="95"/>
        <end position="134"/>
    </location>
</feature>
<feature type="repeat" description="ARM 3">
    <location>
        <begin position="138"/>
        <end position="176"/>
    </location>
</feature>
<feature type="repeat" description="ARM 4">
    <location>
        <begin position="178"/>
        <end position="217"/>
    </location>
</feature>
<feature type="repeat" description="ARM 5">
    <location>
        <begin position="224"/>
        <end position="265"/>
    </location>
</feature>
<feature type="repeat" description="ARM 6">
    <location>
        <begin position="269"/>
        <end position="309"/>
    </location>
</feature>
<feature type="repeat" description="ARM 7">
    <location>
        <begin position="313"/>
        <end position="352"/>
    </location>
</feature>
<feature type="repeat" description="ARM 8">
    <location>
        <begin position="374"/>
        <end position="413"/>
    </location>
</feature>
<feature type="repeat" description="ARM 9">
    <location>
        <begin position="416"/>
        <end position="455"/>
    </location>
</feature>
<feature type="repeat" description="ARM 10">
    <location>
        <begin position="458"/>
        <end position="497"/>
    </location>
</feature>
<feature type="repeat" description="ARM 11">
    <location>
        <begin position="501"/>
        <end position="540"/>
    </location>
</feature>
<feature type="repeat" description="ARM 12">
    <location>
        <begin position="543"/>
        <end position="585"/>
    </location>
</feature>
<feature type="repeat" description="ARM 13">
    <location>
        <begin position="588"/>
        <end position="627"/>
    </location>
</feature>
<feature type="repeat" description="ARM 14">
    <location>
        <begin position="634"/>
        <end position="673"/>
    </location>
</feature>
<feature type="modified residue" description="N-acetylalanine" evidence="3">
    <location>
        <position position="2"/>
    </location>
</feature>
<feature type="modified residue" description="Phosphoserine" evidence="8">
    <location>
        <position position="337"/>
    </location>
</feature>
<feature type="modified residue" description="Phosphoserine" evidence="8">
    <location>
        <position position="512"/>
    </location>
</feature>
<feature type="splice variant" id="VSP_024512" description="In isoform 3." evidence="4">
    <location>
        <begin position="1"/>
        <end position="42"/>
    </location>
</feature>
<feature type="splice variant" id="VSP_024509" description="In isoform 2 and isoform 6." evidence="4 5 6">
    <location>
        <begin position="2"/>
        <end position="15"/>
    </location>
</feature>
<feature type="splice variant" id="VSP_044774" description="In isoform 7." evidence="4">
    <location>
        <begin position="146"/>
        <end position="176"/>
    </location>
</feature>
<feature type="splice variant" id="VSP_045137" description="In isoform 8." evidence="4">
    <location>
        <begin position="280"/>
        <end position="346"/>
    </location>
</feature>
<feature type="splice variant" id="VSP_024513" description="In isoform 6." evidence="4 5 6">
    <original>IIETENMMDRIVTGLSESSVK</original>
    <variation>VSLGEGRPPVLTASRQGVTST</variation>
    <location>
        <begin position="379"/>
        <end position="399"/>
    </location>
</feature>
<feature type="splice variant" id="VSP_024514" description="In isoform 6." evidence="4 5 6">
    <location>
        <begin position="400"/>
        <end position="673"/>
    </location>
</feature>
<feature type="sequence conflict" description="In Ref. 2; BAA91861." evidence="7" ref="2">
    <original>E</original>
    <variation>G</variation>
    <location>
        <position position="78"/>
    </location>
</feature>
<feature type="sequence conflict" description="In Ref. 2; BAH12439." evidence="7" ref="2">
    <original>C</original>
    <variation>R</variation>
    <location>
        <position position="128"/>
    </location>
</feature>
<feature type="sequence conflict" description="In Ref. 5; AAH32661." evidence="7" ref="5">
    <original>V</original>
    <variation>A</variation>
    <location>
        <position position="231"/>
    </location>
</feature>
<feature type="sequence conflict" description="In Ref. 2; BAA91861." evidence="7" ref="2">
    <original>M</original>
    <variation>V</variation>
    <location>
        <position position="327"/>
    </location>
</feature>
<feature type="sequence conflict" description="In Ref. 2; BAA91959." evidence="7" ref="2">
    <original>S</original>
    <variation>N</variation>
    <location>
        <position position="397"/>
    </location>
</feature>
<feature type="sequence conflict" description="In Ref. 2; BAH12439." evidence="7" ref="2">
    <original>E</original>
    <variation>G</variation>
    <location>
        <position position="462"/>
    </location>
</feature>
<feature type="sequence conflict" description="In Ref. 2; BAH12439." evidence="7" ref="2">
    <original>M</original>
    <variation>I</variation>
    <location>
        <position position="495"/>
    </location>
</feature>
<feature type="sequence conflict" description="In Ref. 2; BAA91959." evidence="7" ref="2">
    <original>N</original>
    <variation>S</variation>
    <location>
        <position position="537"/>
    </location>
</feature>
<feature type="helix" evidence="9">
    <location>
        <begin position="35"/>
        <end position="47"/>
    </location>
</feature>
<feature type="helix" evidence="9">
    <location>
        <begin position="51"/>
        <end position="56"/>
    </location>
</feature>
<feature type="strand" evidence="9">
    <location>
        <begin position="73"/>
        <end position="75"/>
    </location>
</feature>
<feature type="helix" evidence="9">
    <location>
        <begin position="77"/>
        <end position="91"/>
    </location>
</feature>
<feature type="helix" evidence="9">
    <location>
        <begin position="96"/>
        <end position="102"/>
    </location>
</feature>
<feature type="helix" evidence="9">
    <location>
        <begin position="107"/>
        <end position="113"/>
    </location>
</feature>
<feature type="helix" evidence="9">
    <location>
        <begin position="119"/>
        <end position="134"/>
    </location>
</feature>
<feature type="strand" evidence="9">
    <location>
        <begin position="135"/>
        <end position="138"/>
    </location>
</feature>
<feature type="strand" evidence="9">
    <location>
        <begin position="140"/>
        <end position="146"/>
    </location>
</feature>
<feature type="helix" evidence="9">
    <location>
        <begin position="149"/>
        <end position="157"/>
    </location>
</feature>
<feature type="helix" evidence="9">
    <location>
        <begin position="161"/>
        <end position="174"/>
    </location>
</feature>
<feature type="helix" evidence="9">
    <location>
        <begin position="178"/>
        <end position="186"/>
    </location>
</feature>
<feature type="helix" evidence="9">
    <location>
        <begin position="189"/>
        <end position="193"/>
    </location>
</feature>
<feature type="helix" evidence="9">
    <location>
        <begin position="202"/>
        <end position="215"/>
    </location>
</feature>
<feature type="strand" evidence="9">
    <location>
        <begin position="216"/>
        <end position="218"/>
    </location>
</feature>
<feature type="helix" evidence="9">
    <location>
        <begin position="220"/>
        <end position="226"/>
    </location>
</feature>
<feature type="strand" evidence="9">
    <location>
        <begin position="231"/>
        <end position="234"/>
    </location>
</feature>
<feature type="helix" evidence="9">
    <location>
        <begin position="236"/>
        <end position="242"/>
    </location>
</feature>
<feature type="strand" evidence="9">
    <location>
        <begin position="245"/>
        <end position="248"/>
    </location>
</feature>
<feature type="helix" evidence="9">
    <location>
        <begin position="250"/>
        <end position="266"/>
    </location>
</feature>
<feature type="helix" evidence="9">
    <location>
        <begin position="274"/>
        <end position="277"/>
    </location>
</feature>
<feature type="helix" evidence="9">
    <location>
        <begin position="280"/>
        <end position="287"/>
    </location>
</feature>
<feature type="strand" evidence="9">
    <location>
        <begin position="288"/>
        <end position="292"/>
    </location>
</feature>
<feature type="helix" evidence="9">
    <location>
        <begin position="294"/>
        <end position="307"/>
    </location>
</feature>
<feature type="helix" evidence="9">
    <location>
        <begin position="313"/>
        <end position="320"/>
    </location>
</feature>
<feature type="helix" evidence="9">
    <location>
        <begin position="324"/>
        <end position="329"/>
    </location>
</feature>
<feature type="helix" evidence="9">
    <location>
        <begin position="348"/>
        <end position="352"/>
    </location>
</feature>
<feature type="helix" evidence="9">
    <location>
        <begin position="354"/>
        <end position="368"/>
    </location>
</feature>
<feature type="helix" evidence="9">
    <location>
        <begin position="374"/>
        <end position="381"/>
    </location>
</feature>
<feature type="helix" evidence="9">
    <location>
        <begin position="386"/>
        <end position="393"/>
    </location>
</feature>
<feature type="strand" evidence="9">
    <location>
        <begin position="394"/>
        <end position="396"/>
    </location>
</feature>
<feature type="helix" evidence="9">
    <location>
        <begin position="398"/>
        <end position="411"/>
    </location>
</feature>
<feature type="helix" evidence="9">
    <location>
        <begin position="415"/>
        <end position="424"/>
    </location>
</feature>
<feature type="helix" evidence="9">
    <location>
        <begin position="428"/>
        <end position="436"/>
    </location>
</feature>
<feature type="helix" evidence="9">
    <location>
        <begin position="440"/>
        <end position="453"/>
    </location>
</feature>
<feature type="helix" evidence="9">
    <location>
        <begin position="462"/>
        <end position="465"/>
    </location>
</feature>
<feature type="helix" evidence="9">
    <location>
        <begin position="469"/>
        <end position="475"/>
    </location>
</feature>
<feature type="helix" evidence="9">
    <location>
        <begin position="482"/>
        <end position="495"/>
    </location>
</feature>
<feature type="turn" evidence="9">
    <location>
        <begin position="496"/>
        <end position="498"/>
    </location>
</feature>
<feature type="helix" evidence="9">
    <location>
        <begin position="501"/>
        <end position="510"/>
    </location>
</feature>
<feature type="helix" evidence="9">
    <location>
        <begin position="513"/>
        <end position="520"/>
    </location>
</feature>
<feature type="helix" evidence="9">
    <location>
        <begin position="525"/>
        <end position="537"/>
    </location>
</feature>
<feature type="helix" evidence="9">
    <location>
        <begin position="542"/>
        <end position="549"/>
    </location>
</feature>
<feature type="turn" evidence="9">
    <location>
        <begin position="553"/>
        <end position="555"/>
    </location>
</feature>
<feature type="helix" evidence="9">
    <location>
        <begin position="556"/>
        <end position="565"/>
    </location>
</feature>
<feature type="helix" evidence="9">
    <location>
        <begin position="570"/>
        <end position="584"/>
    </location>
</feature>
<feature type="strand" evidence="9">
    <location>
        <begin position="586"/>
        <end position="588"/>
    </location>
</feature>
<feature type="helix" evidence="9">
    <location>
        <begin position="589"/>
        <end position="594"/>
    </location>
</feature>
<feature type="helix" evidence="9">
    <location>
        <begin position="597"/>
        <end position="606"/>
    </location>
</feature>
<feature type="helix" evidence="9">
    <location>
        <begin position="612"/>
        <end position="625"/>
    </location>
</feature>
<feature type="strand" evidence="9">
    <location>
        <begin position="628"/>
        <end position="631"/>
    </location>
</feature>
<feature type="helix" evidence="9">
    <location>
        <begin position="633"/>
        <end position="641"/>
    </location>
</feature>
<feature type="helix" evidence="9">
    <location>
        <begin position="646"/>
        <end position="653"/>
    </location>
</feature>
<feature type="helix" evidence="9">
    <location>
        <begin position="658"/>
        <end position="669"/>
    </location>
</feature>
<sequence length="673" mass="75509">MACLLETPIRMSVLSEVTASSRHYVDRLFDPDPQKVLQGVIDMKNAVIGNNKQKANLIVLGAVPRLLYLLQQETSSTELKTECAVVLGSLAMGTENNVKSLLDCHIIPALLQGLLSPDLKFIEACLRCLRTIFTSPVTPEELLYTDATVIPHLMALLSRSRYTQEYICQIFSHCCKGPDHQTILFNHGAVQNIAHLLTSLSYKVRMQALKCFSVLAFENPQVSMTLVNVLVDGELLPQIFVKMLQRDKPIEMQLTSAKCLTYMCRAGAIRTDDNCIVLKTLPCLVRMCSKERLLEERVEGAETLAYLIEPDVELQRIASITDHLIAMLADYFKYPSSVSAITDIKRLDHDLKHAHELRQAAFKLYASLGANDEDIRKKIIETENMMDRIVTGLSESSVKVRLAAVRCLHSLSRSVQQLRTSFQDHAVWKPLMKVLQNAPDEILVVASSMLCNLLLEFSPSKEPILESGAVELLCGLTQSENPALRVNGIWALMNMAFQAEQKIKADILRSLSTEQLFRLLSDSDLNVLMKTLGLLRNLLSTRPHIDKIMSTHGKQIMQAVTLILEGEHNIEVKEQTLCILANIADGTTAKDLIMTNDDILQKIKYYMGHSHVKLQLAAMFCISNLIWNEEEGSQERQDKLRDMGIVDILHKLSQSPDSNLCDKAKMALQQYLA</sequence>
<organism>
    <name type="scientific">Homo sapiens</name>
    <name type="common">Human</name>
    <dbReference type="NCBI Taxonomy" id="9606"/>
    <lineage>
        <taxon>Eukaryota</taxon>
        <taxon>Metazoa</taxon>
        <taxon>Chordata</taxon>
        <taxon>Craniata</taxon>
        <taxon>Vertebrata</taxon>
        <taxon>Euteleostomi</taxon>
        <taxon>Mammalia</taxon>
        <taxon>Eutheria</taxon>
        <taxon>Euarchontoglires</taxon>
        <taxon>Primates</taxon>
        <taxon>Haplorrhini</taxon>
        <taxon>Catarrhini</taxon>
        <taxon>Hominidae</taxon>
        <taxon>Homo</taxon>
    </lineage>
</organism>
<comment type="function">
    <text evidence="2">Component of the CTLH E3 ubiquitin-protein ligase complex that selectively accepts ubiquitin from UBE2H and mediates ubiquitination and subsequent proteasomal degradation of the transcription factor HBP1.</text>
</comment>
<comment type="subunit">
    <text evidence="1 2">Identified in the CTLH complex that contains GID4, RANBP9 and/or RANBP10, MKLN1, MAEA, RMND5A (or alternatively its paralog RMND5B), GID8, ARMC8, WDR26 and YPEL5 (PubMed:17467196, PubMed:29911972). Within this complex, MAEA, RMND5A (or alternatively its paralog RMND5B), GID8, WDR26, and RANBP9 and/or RANBP10 form the catalytic core, while GID4, MKLN1, ARMC8 and YPEL5 have ancillary roles (PubMed:29911972).</text>
</comment>
<comment type="interaction">
    <interactant intactId="EBI-1049469">
        <id>Q8IUR7</id>
    </interactant>
    <interactant intactId="EBI-722877">
        <id>Q99081</id>
        <label>TCF12</label>
    </interactant>
    <organismsDiffer>false</organismsDiffer>
    <experiments>3</experiments>
</comment>
<comment type="interaction">
    <interactant intactId="EBI-11942961">
        <id>Q8IUR7-6</id>
    </interactant>
    <interactant intactId="EBI-10292696">
        <id>Q96Q77</id>
        <label>CIB3</label>
    </interactant>
    <organismsDiffer>false</organismsDiffer>
    <experiments>3</experiments>
</comment>
<comment type="interaction">
    <interactant intactId="EBI-11942961">
        <id>Q8IUR7-6</id>
    </interactant>
    <interactant intactId="EBI-1051077">
        <id>Q9NWU2</id>
        <label>GID8</label>
    </interactant>
    <organismsDiffer>false</organismsDiffer>
    <experiments>4</experiments>
</comment>
<comment type="interaction">
    <interactant intactId="EBI-11942961">
        <id>Q8IUR7-6</id>
    </interactant>
    <interactant intactId="EBI-2695795">
        <id>O43752</id>
        <label>STX6</label>
    </interactant>
    <organismsDiffer>false</organismsDiffer>
    <experiments>3</experiments>
</comment>
<comment type="interaction">
    <interactant intactId="EBI-11942961">
        <id>Q8IUR7-6</id>
    </interactant>
    <interactant intactId="EBI-12030590">
        <id>Q9H0C1</id>
        <label>ZMYND12</label>
    </interactant>
    <organismsDiffer>false</organismsDiffer>
    <experiments>3</experiments>
</comment>
<comment type="subcellular location">
    <subcellularLocation>
        <location evidence="1">Nucleus</location>
    </subcellularLocation>
    <subcellularLocation>
        <location evidence="1">Cytoplasm</location>
    </subcellularLocation>
</comment>
<comment type="alternative products">
    <event type="alternative splicing"/>
    <isoform>
        <id>Q8IUR7-1</id>
        <name>1</name>
        <sequence type="displayed"/>
    </isoform>
    <isoform>
        <id>Q8IUR7-2</id>
        <name>2</name>
        <sequence type="described" ref="VSP_024509"/>
    </isoform>
    <isoform>
        <id>Q8IUR7-3</id>
        <name>3</name>
        <sequence type="described" ref="VSP_024512"/>
    </isoform>
    <isoform>
        <id>Q8IUR7-6</id>
        <name>6</name>
        <sequence type="described" ref="VSP_024509 VSP_024513 VSP_024514"/>
    </isoform>
    <isoform>
        <id>Q8IUR7-7</id>
        <name>7</name>
        <sequence type="described" ref="VSP_044774"/>
    </isoform>
    <isoform>
        <id>Q8IUR7-8</id>
        <name>8</name>
        <sequence type="described" ref="VSP_045137"/>
    </isoform>
</comment>
<comment type="sequence caution" evidence="7">
    <conflict type="frameshift">
        <sequence resource="EMBL-CDS" id="BAA91861"/>
    </conflict>
</comment>
<comment type="sequence caution" evidence="7">
    <conflict type="miscellaneous discrepancy">
        <sequence resource="EMBL-CDS" id="BAA91959"/>
    </conflict>
    <text>Intron retention.</text>
</comment>
<comment type="sequence caution" evidence="7">
    <conflict type="miscellaneous discrepancy">
        <sequence resource="EMBL-CDS" id="CAB46423"/>
    </conflict>
    <text>Intron retention.</text>
</comment>
<name>ARMC8_HUMAN</name>
<accession>Q8IUR7</accession>
<accession>A8K0L2</accession>
<accession>B7Z441</accession>
<accession>B7Z453</accession>
<accession>D3DNE6</accession>
<accession>F5GWK4</accession>
<accession>Q6PIL2</accession>
<accession>Q96D19</accession>
<accession>Q96HZ5</accession>
<accession>Q9NV02</accession>
<accession>Q9NV94</accession>
<accession>Q9Y4R9</accession>
<keyword id="KW-0002">3D-structure</keyword>
<keyword id="KW-0007">Acetylation</keyword>
<keyword id="KW-0025">Alternative splicing</keyword>
<keyword id="KW-0963">Cytoplasm</keyword>
<keyword id="KW-0903">Direct protein sequencing</keyword>
<keyword id="KW-0539">Nucleus</keyword>
<keyword id="KW-0597">Phosphoprotein</keyword>
<keyword id="KW-1267">Proteomics identification</keyword>
<keyword id="KW-1185">Reference proteome</keyword>
<keyword id="KW-0677">Repeat</keyword>
<protein>
    <recommendedName>
        <fullName>Armadillo repeat-containing protein 8</fullName>
    </recommendedName>
</protein>
<gene>
    <name type="primary">ARMC8</name>
    <name type="ORF">S863-2</name>
</gene>
<proteinExistence type="evidence at protein level"/>
<reference key="1">
    <citation type="submission" date="1998-11" db="EMBL/GenBank/DDBJ databases">
        <authorList>
            <person name="Liu B."/>
            <person name="Zhao B."/>
            <person name="Wang X.Y."/>
            <person name="Xu Y.Y."/>
            <person name="Liu Y.Q."/>
            <person name="Song L."/>
            <person name="Ye J."/>
            <person name="Sheng H."/>
            <person name="Gao Y."/>
            <person name="Zhang C.L."/>
            <person name="Wei Y.J."/>
            <person name="Zhang J."/>
            <person name="Song L."/>
            <person name="Jiang Y.X."/>
            <person name="Zhao Z.W."/>
            <person name="Ding J.F."/>
            <person name="Liu L.S."/>
            <person name="Gao R.L."/>
            <person name="Wu Q.Y."/>
            <person name="Qiang B.Q."/>
            <person name="Yuan J.G."/>
            <person name="Liew C.C."/>
            <person name="Zhao M.S."/>
            <person name="Hui R.T."/>
        </authorList>
    </citation>
    <scope>NUCLEOTIDE SEQUENCE [LARGE SCALE MRNA] (ISOFORM 6)</scope>
    <source>
        <tissue>Aorta</tissue>
    </source>
</reference>
<reference key="2">
    <citation type="journal article" date="2004" name="Nat. Genet.">
        <title>Complete sequencing and characterization of 21,243 full-length human cDNAs.</title>
        <authorList>
            <person name="Ota T."/>
            <person name="Suzuki Y."/>
            <person name="Nishikawa T."/>
            <person name="Otsuki T."/>
            <person name="Sugiyama T."/>
            <person name="Irie R."/>
            <person name="Wakamatsu A."/>
            <person name="Hayashi K."/>
            <person name="Sato H."/>
            <person name="Nagai K."/>
            <person name="Kimura K."/>
            <person name="Makita H."/>
            <person name="Sekine M."/>
            <person name="Obayashi M."/>
            <person name="Nishi T."/>
            <person name="Shibahara T."/>
            <person name="Tanaka T."/>
            <person name="Ishii S."/>
            <person name="Yamamoto J."/>
            <person name="Saito K."/>
            <person name="Kawai Y."/>
            <person name="Isono Y."/>
            <person name="Nakamura Y."/>
            <person name="Nagahari K."/>
            <person name="Murakami K."/>
            <person name="Yasuda T."/>
            <person name="Iwayanagi T."/>
            <person name="Wagatsuma M."/>
            <person name="Shiratori A."/>
            <person name="Sudo H."/>
            <person name="Hosoiri T."/>
            <person name="Kaku Y."/>
            <person name="Kodaira H."/>
            <person name="Kondo H."/>
            <person name="Sugawara M."/>
            <person name="Takahashi M."/>
            <person name="Kanda K."/>
            <person name="Yokoi T."/>
            <person name="Furuya T."/>
            <person name="Kikkawa E."/>
            <person name="Omura Y."/>
            <person name="Abe K."/>
            <person name="Kamihara K."/>
            <person name="Katsuta N."/>
            <person name="Sato K."/>
            <person name="Tanikawa M."/>
            <person name="Yamazaki M."/>
            <person name="Ninomiya K."/>
            <person name="Ishibashi T."/>
            <person name="Yamashita H."/>
            <person name="Murakawa K."/>
            <person name="Fujimori K."/>
            <person name="Tanai H."/>
            <person name="Kimata M."/>
            <person name="Watanabe M."/>
            <person name="Hiraoka S."/>
            <person name="Chiba Y."/>
            <person name="Ishida S."/>
            <person name="Ono Y."/>
            <person name="Takiguchi S."/>
            <person name="Watanabe S."/>
            <person name="Yosida M."/>
            <person name="Hotuta T."/>
            <person name="Kusano J."/>
            <person name="Kanehori K."/>
            <person name="Takahashi-Fujii A."/>
            <person name="Hara H."/>
            <person name="Tanase T.-O."/>
            <person name="Nomura Y."/>
            <person name="Togiya S."/>
            <person name="Komai F."/>
            <person name="Hara R."/>
            <person name="Takeuchi K."/>
            <person name="Arita M."/>
            <person name="Imose N."/>
            <person name="Musashino K."/>
            <person name="Yuuki H."/>
            <person name="Oshima A."/>
            <person name="Sasaki N."/>
            <person name="Aotsuka S."/>
            <person name="Yoshikawa Y."/>
            <person name="Matsunawa H."/>
            <person name="Ichihara T."/>
            <person name="Shiohata N."/>
            <person name="Sano S."/>
            <person name="Moriya S."/>
            <person name="Momiyama H."/>
            <person name="Satoh N."/>
            <person name="Takami S."/>
            <person name="Terashima Y."/>
            <person name="Suzuki O."/>
            <person name="Nakagawa S."/>
            <person name="Senoh A."/>
            <person name="Mizoguchi H."/>
            <person name="Goto Y."/>
            <person name="Shimizu F."/>
            <person name="Wakebe H."/>
            <person name="Hishigaki H."/>
            <person name="Watanabe T."/>
            <person name="Sugiyama A."/>
            <person name="Takemoto M."/>
            <person name="Kawakami B."/>
            <person name="Yamazaki M."/>
            <person name="Watanabe K."/>
            <person name="Kumagai A."/>
            <person name="Itakura S."/>
            <person name="Fukuzumi Y."/>
            <person name="Fujimori Y."/>
            <person name="Komiyama M."/>
            <person name="Tashiro H."/>
            <person name="Tanigami A."/>
            <person name="Fujiwara T."/>
            <person name="Ono T."/>
            <person name="Yamada K."/>
            <person name="Fujii Y."/>
            <person name="Ozaki K."/>
            <person name="Hirao M."/>
            <person name="Ohmori Y."/>
            <person name="Kawabata A."/>
            <person name="Hikiji T."/>
            <person name="Kobatake N."/>
            <person name="Inagaki H."/>
            <person name="Ikema Y."/>
            <person name="Okamoto S."/>
            <person name="Okitani R."/>
            <person name="Kawakami T."/>
            <person name="Noguchi S."/>
            <person name="Itoh T."/>
            <person name="Shigeta K."/>
            <person name="Senba T."/>
            <person name="Matsumura K."/>
            <person name="Nakajima Y."/>
            <person name="Mizuno T."/>
            <person name="Morinaga M."/>
            <person name="Sasaki M."/>
            <person name="Togashi T."/>
            <person name="Oyama M."/>
            <person name="Hata H."/>
            <person name="Watanabe M."/>
            <person name="Komatsu T."/>
            <person name="Mizushima-Sugano J."/>
            <person name="Satoh T."/>
            <person name="Shirai Y."/>
            <person name="Takahashi Y."/>
            <person name="Nakagawa K."/>
            <person name="Okumura K."/>
            <person name="Nagase T."/>
            <person name="Nomura N."/>
            <person name="Kikuchi H."/>
            <person name="Masuho Y."/>
            <person name="Yamashita R."/>
            <person name="Nakai K."/>
            <person name="Yada T."/>
            <person name="Nakamura Y."/>
            <person name="Ohara O."/>
            <person name="Isogai T."/>
            <person name="Sugano S."/>
        </authorList>
    </citation>
    <scope>NUCLEOTIDE SEQUENCE [LARGE SCALE MRNA] (ISOFORMS 3; 6; 7 AND 8)</scope>
    <scope>NUCLEOTIDE SEQUENCE [LARGE SCALE MRNA] OF 243-673 (ISOFORMS 1/2/3)</scope>
    <source>
        <tissue>Cerebellum</tissue>
        <tissue>Placenta</tissue>
        <tissue>Teratocarcinoma</tissue>
        <tissue>Tongue</tissue>
    </source>
</reference>
<reference key="3">
    <citation type="journal article" date="2006" name="Nature">
        <title>The DNA sequence, annotation and analysis of human chromosome 3.</title>
        <authorList>
            <person name="Muzny D.M."/>
            <person name="Scherer S.E."/>
            <person name="Kaul R."/>
            <person name="Wang J."/>
            <person name="Yu J."/>
            <person name="Sudbrak R."/>
            <person name="Buhay C.J."/>
            <person name="Chen R."/>
            <person name="Cree A."/>
            <person name="Ding Y."/>
            <person name="Dugan-Rocha S."/>
            <person name="Gill R."/>
            <person name="Gunaratne P."/>
            <person name="Harris R.A."/>
            <person name="Hawes A.C."/>
            <person name="Hernandez J."/>
            <person name="Hodgson A.V."/>
            <person name="Hume J."/>
            <person name="Jackson A."/>
            <person name="Khan Z.M."/>
            <person name="Kovar-Smith C."/>
            <person name="Lewis L.R."/>
            <person name="Lozado R.J."/>
            <person name="Metzker M.L."/>
            <person name="Milosavljevic A."/>
            <person name="Miner G.R."/>
            <person name="Morgan M.B."/>
            <person name="Nazareth L.V."/>
            <person name="Scott G."/>
            <person name="Sodergren E."/>
            <person name="Song X.-Z."/>
            <person name="Steffen D."/>
            <person name="Wei S."/>
            <person name="Wheeler D.A."/>
            <person name="Wright M.W."/>
            <person name="Worley K.C."/>
            <person name="Yuan Y."/>
            <person name="Zhang Z."/>
            <person name="Adams C.Q."/>
            <person name="Ansari-Lari M.A."/>
            <person name="Ayele M."/>
            <person name="Brown M.J."/>
            <person name="Chen G."/>
            <person name="Chen Z."/>
            <person name="Clendenning J."/>
            <person name="Clerc-Blankenburg K.P."/>
            <person name="Chen R."/>
            <person name="Chen Z."/>
            <person name="Davis C."/>
            <person name="Delgado O."/>
            <person name="Dinh H.H."/>
            <person name="Dong W."/>
            <person name="Draper H."/>
            <person name="Ernst S."/>
            <person name="Fu G."/>
            <person name="Gonzalez-Garay M.L."/>
            <person name="Garcia D.K."/>
            <person name="Gillett W."/>
            <person name="Gu J."/>
            <person name="Hao B."/>
            <person name="Haugen E."/>
            <person name="Havlak P."/>
            <person name="He X."/>
            <person name="Hennig S."/>
            <person name="Hu S."/>
            <person name="Huang W."/>
            <person name="Jackson L.R."/>
            <person name="Jacob L.S."/>
            <person name="Kelly S.H."/>
            <person name="Kube M."/>
            <person name="Levy R."/>
            <person name="Li Z."/>
            <person name="Liu B."/>
            <person name="Liu J."/>
            <person name="Liu W."/>
            <person name="Lu J."/>
            <person name="Maheshwari M."/>
            <person name="Nguyen B.-V."/>
            <person name="Okwuonu G.O."/>
            <person name="Palmeiri A."/>
            <person name="Pasternak S."/>
            <person name="Perez L.M."/>
            <person name="Phelps K.A."/>
            <person name="Plopper F.J."/>
            <person name="Qiang B."/>
            <person name="Raymond C."/>
            <person name="Rodriguez R."/>
            <person name="Saenphimmachak C."/>
            <person name="Santibanez J."/>
            <person name="Shen H."/>
            <person name="Shen Y."/>
            <person name="Subramanian S."/>
            <person name="Tabor P.E."/>
            <person name="Verduzco D."/>
            <person name="Waldron L."/>
            <person name="Wang J."/>
            <person name="Wang J."/>
            <person name="Wang Q."/>
            <person name="Williams G.A."/>
            <person name="Wong G.K.-S."/>
            <person name="Yao Z."/>
            <person name="Zhang J."/>
            <person name="Zhang X."/>
            <person name="Zhao G."/>
            <person name="Zhou J."/>
            <person name="Zhou Y."/>
            <person name="Nelson D."/>
            <person name="Lehrach H."/>
            <person name="Reinhardt R."/>
            <person name="Naylor S.L."/>
            <person name="Yang H."/>
            <person name="Olson M."/>
            <person name="Weinstock G."/>
            <person name="Gibbs R.A."/>
        </authorList>
    </citation>
    <scope>NUCLEOTIDE SEQUENCE [LARGE SCALE GENOMIC DNA]</scope>
</reference>
<reference key="4">
    <citation type="submission" date="2005-09" db="EMBL/GenBank/DDBJ databases">
        <authorList>
            <person name="Mural R.J."/>
            <person name="Istrail S."/>
            <person name="Sutton G.G."/>
            <person name="Florea L."/>
            <person name="Halpern A.L."/>
            <person name="Mobarry C.M."/>
            <person name="Lippert R."/>
            <person name="Walenz B."/>
            <person name="Shatkay H."/>
            <person name="Dew I."/>
            <person name="Miller J.R."/>
            <person name="Flanigan M.J."/>
            <person name="Edwards N.J."/>
            <person name="Bolanos R."/>
            <person name="Fasulo D."/>
            <person name="Halldorsson B.V."/>
            <person name="Hannenhalli S."/>
            <person name="Turner R."/>
            <person name="Yooseph S."/>
            <person name="Lu F."/>
            <person name="Nusskern D.R."/>
            <person name="Shue B.C."/>
            <person name="Zheng X.H."/>
            <person name="Zhong F."/>
            <person name="Delcher A.L."/>
            <person name="Huson D.H."/>
            <person name="Kravitz S.A."/>
            <person name="Mouchard L."/>
            <person name="Reinert K."/>
            <person name="Remington K.A."/>
            <person name="Clark A.G."/>
            <person name="Waterman M.S."/>
            <person name="Eichler E.E."/>
            <person name="Adams M.D."/>
            <person name="Hunkapiller M.W."/>
            <person name="Myers E.W."/>
            <person name="Venter J.C."/>
        </authorList>
    </citation>
    <scope>NUCLEOTIDE SEQUENCE [LARGE SCALE GENOMIC DNA]</scope>
</reference>
<reference key="5">
    <citation type="journal article" date="2004" name="Genome Res.">
        <title>The status, quality, and expansion of the NIH full-length cDNA project: the Mammalian Gene Collection (MGC).</title>
        <authorList>
            <consortium name="The MGC Project Team"/>
        </authorList>
    </citation>
    <scope>NUCLEOTIDE SEQUENCE [LARGE SCALE MRNA] (ISOFORMS 2 AND 6)</scope>
    <source>
        <tissue>Brain</tissue>
        <tissue>Lung</tissue>
        <tissue>Uterus</tissue>
    </source>
</reference>
<reference key="6">
    <citation type="submission" date="2009-10" db="UniProtKB">
        <authorList>
            <person name="Bienvenut W.V."/>
            <person name="Lempens A."/>
            <person name="Norman J.C."/>
        </authorList>
    </citation>
    <scope>PROTEIN SEQUENCE OF 2-22; 36-44; 55-65; 247-258; 364-376; 379-399; 510-530; 591-602 AND 642-651</scope>
    <scope>CLEAVAGE OF INITIATOR METHIONINE</scope>
    <scope>ACETYLATION AT ALA-2</scope>
    <scope>IDENTIFICATION BY MASS SPECTROMETRY</scope>
    <source>
        <tissue>Ovarian carcinoma</tissue>
    </source>
</reference>
<reference key="7">
    <citation type="journal article" date="2007" name="BMC Genomics">
        <title>The full-ORF clone resource of the German cDNA consortium.</title>
        <authorList>
            <person name="Bechtel S."/>
            <person name="Rosenfelder H."/>
            <person name="Duda A."/>
            <person name="Schmidt C.P."/>
            <person name="Ernst U."/>
            <person name="Wellenreuther R."/>
            <person name="Mehrle A."/>
            <person name="Schuster C."/>
            <person name="Bahr A."/>
            <person name="Bloecker H."/>
            <person name="Heubner D."/>
            <person name="Hoerlein A."/>
            <person name="Michel G."/>
            <person name="Wedler H."/>
            <person name="Koehrer K."/>
            <person name="Ottenwaelder B."/>
            <person name="Poustka A."/>
            <person name="Wiemann S."/>
            <person name="Schupp I."/>
        </authorList>
    </citation>
    <scope>NUCLEOTIDE SEQUENCE [LARGE SCALE MRNA] OF 432-673 (ISOFORMS 1/2/3)</scope>
    <source>
        <tissue>Testis</tissue>
    </source>
</reference>
<reference key="8">
    <citation type="journal article" date="2007" name="Gene">
        <title>RanBPM, Muskelin, p48EMLP, p44CTLH, and the armadillo-repeat proteins ARMC8alpha and ARMC8beta are components of the CTLH complex.</title>
        <authorList>
            <person name="Kobayashi N."/>
            <person name="Yang J."/>
            <person name="Ueda A."/>
            <person name="Suzuki T."/>
            <person name="Tomaru K."/>
            <person name="Takeno M."/>
            <person name="Okuda K."/>
            <person name="Ishigatsubo Y."/>
        </authorList>
    </citation>
    <scope>IDENTIFICATION IN THE CTLH COMPLEX</scope>
    <scope>IDENTIFICATION BY MASS SPECTROMETRY</scope>
    <scope>SUBCELLULAR LOCATION</scope>
</reference>
<reference key="9">
    <citation type="journal article" date="2011" name="BMC Syst. Biol.">
        <title>Initial characterization of the human central proteome.</title>
        <authorList>
            <person name="Burkard T.R."/>
            <person name="Planyavsky M."/>
            <person name="Kaupe I."/>
            <person name="Breitwieser F.P."/>
            <person name="Buerckstuemmer T."/>
            <person name="Bennett K.L."/>
            <person name="Superti-Furga G."/>
            <person name="Colinge J."/>
        </authorList>
    </citation>
    <scope>IDENTIFICATION BY MASS SPECTROMETRY [LARGE SCALE ANALYSIS]</scope>
</reference>
<reference key="10">
    <citation type="journal article" date="2013" name="J. Proteome Res.">
        <title>Toward a comprehensive characterization of a human cancer cell phosphoproteome.</title>
        <authorList>
            <person name="Zhou H."/>
            <person name="Di Palma S."/>
            <person name="Preisinger C."/>
            <person name="Peng M."/>
            <person name="Polat A.N."/>
            <person name="Heck A.J."/>
            <person name="Mohammed S."/>
        </authorList>
    </citation>
    <scope>PHOSPHORYLATION [LARGE SCALE ANALYSIS] AT SER-337 AND SER-512</scope>
    <scope>IDENTIFICATION BY MASS SPECTROMETRY [LARGE SCALE ANALYSIS]</scope>
    <source>
        <tissue>Erythroleukemia</tissue>
    </source>
</reference>
<reference key="11">
    <citation type="journal article" date="2018" name="Elife">
        <title>The multi-subunit GID/CTLH E3 ligase promotes proliferation and targets the transcription factor Hbp1 for degradation.</title>
        <authorList>
            <person name="Lampert F."/>
            <person name="Stafa D."/>
            <person name="Goga A."/>
            <person name="Soste M.V."/>
            <person name="Gilberto S."/>
            <person name="Olieric N."/>
            <person name="Picotti P."/>
            <person name="Stoffel M."/>
            <person name="Peter M."/>
        </authorList>
    </citation>
    <scope>FUNCTION</scope>
    <scope>IDENTIFICATION IN THE CTLH COMPLEX</scope>
    <scope>IDENTIFICATION BY MASS SPECTROMETRY</scope>
</reference>
<evidence type="ECO:0000269" key="1">
    <source>
    </source>
</evidence>
<evidence type="ECO:0000269" key="2">
    <source>
    </source>
</evidence>
<evidence type="ECO:0000269" key="3">
    <source ref="6"/>
</evidence>
<evidence type="ECO:0000303" key="4">
    <source>
    </source>
</evidence>
<evidence type="ECO:0000303" key="5">
    <source>
    </source>
</evidence>
<evidence type="ECO:0000303" key="6">
    <source ref="1"/>
</evidence>
<evidence type="ECO:0000305" key="7"/>
<evidence type="ECO:0007744" key="8">
    <source>
    </source>
</evidence>
<evidence type="ECO:0007829" key="9">
    <source>
        <dbReference type="PDB" id="7NSC"/>
    </source>
</evidence>